<sequence length="81" mass="9021">MNVEHEISLLVEEIRRLGTKNADGQVSVKFGVLFADEKCANLFEALVGTLKAAKRRKIVTYQGELLLQGVHDNVDIVLLQD</sequence>
<accession>Q6V289</accession>
<proteinExistence type="inferred from homology"/>
<name>ABRAL_COTCO</name>
<comment type="similarity">
    <text evidence="1">Belongs to the costars family.</text>
</comment>
<comment type="sequence caution" evidence="1">
    <conflict type="erroneous initiation">
        <sequence resource="EMBL-CDS" id="AAQ55814"/>
    </conflict>
    <text>Extended N-terminus.</text>
</comment>
<dbReference type="EMBL" id="AY353856">
    <property type="protein sequence ID" value="AAQ55814.1"/>
    <property type="status" value="ALT_INIT"/>
    <property type="molecule type" value="mRNA"/>
</dbReference>
<dbReference type="SMR" id="Q6V289"/>
<dbReference type="GO" id="GO:0032970">
    <property type="term" value="P:regulation of actin filament-based process"/>
    <property type="evidence" value="ECO:0007669"/>
    <property type="project" value="TreeGrafter"/>
</dbReference>
<dbReference type="FunFam" id="1.10.10.1540:FF:000002">
    <property type="entry name" value="costars family protein ABRACL"/>
    <property type="match status" value="1"/>
</dbReference>
<dbReference type="Gene3D" id="1.10.10.1540">
    <property type="entry name" value="Costar domain"/>
    <property type="match status" value="1"/>
</dbReference>
<dbReference type="InterPro" id="IPR044302">
    <property type="entry name" value="Costars"/>
</dbReference>
<dbReference type="InterPro" id="IPR027817">
    <property type="entry name" value="Costars_dom"/>
</dbReference>
<dbReference type="InterPro" id="IPR038095">
    <property type="entry name" value="Costars_sf"/>
</dbReference>
<dbReference type="PANTHER" id="PTHR46334">
    <property type="entry name" value="COSTARS FAMILY PROTEIN ABRACL"/>
    <property type="match status" value="1"/>
</dbReference>
<dbReference type="PANTHER" id="PTHR46334:SF1">
    <property type="entry name" value="COSTARS FAMILY PROTEIN ABRACL"/>
    <property type="match status" value="1"/>
</dbReference>
<dbReference type="Pfam" id="PF14705">
    <property type="entry name" value="Costars"/>
    <property type="match status" value="1"/>
</dbReference>
<dbReference type="SMART" id="SM01283">
    <property type="entry name" value="Costars"/>
    <property type="match status" value="1"/>
</dbReference>
<protein>
    <recommendedName>
        <fullName>Costars family protein ABRACL</fullName>
    </recommendedName>
    <alternativeName>
        <fullName>ABRA C-terminal-like protein</fullName>
    </alternativeName>
</protein>
<reference key="1">
    <citation type="journal article" date="2004" name="Poult. Sci.">
        <title>cDNA array analysis of Japanese quail lines divergently selected for four-week body weight.</title>
        <authorList>
            <person name="Mott I.W."/>
            <person name="Ivarie R.D."/>
        </authorList>
    </citation>
    <scope>NUCLEOTIDE SEQUENCE [LARGE SCALE MRNA]</scope>
</reference>
<organism>
    <name type="scientific">Coturnix coturnix</name>
    <name type="common">Common quail</name>
    <name type="synonym">Tetrao coturnix</name>
    <dbReference type="NCBI Taxonomy" id="9091"/>
    <lineage>
        <taxon>Eukaryota</taxon>
        <taxon>Metazoa</taxon>
        <taxon>Chordata</taxon>
        <taxon>Craniata</taxon>
        <taxon>Vertebrata</taxon>
        <taxon>Euteleostomi</taxon>
        <taxon>Archelosauria</taxon>
        <taxon>Archosauria</taxon>
        <taxon>Dinosauria</taxon>
        <taxon>Saurischia</taxon>
        <taxon>Theropoda</taxon>
        <taxon>Coelurosauria</taxon>
        <taxon>Aves</taxon>
        <taxon>Neognathae</taxon>
        <taxon>Galloanserae</taxon>
        <taxon>Galliformes</taxon>
        <taxon>Phasianidae</taxon>
        <taxon>Perdicinae</taxon>
        <taxon>Coturnix</taxon>
    </lineage>
</organism>
<feature type="chain" id="PRO_0000365537" description="Costars family protein ABRACL">
    <location>
        <begin position="1"/>
        <end position="81"/>
    </location>
</feature>
<evidence type="ECO:0000305" key="1"/>